<sequence length="299" mass="33450">MIKVKVPGTTANMGPGFDSFGMALDIYNEITVEEIESGFEMLQEGELSEIPLAENLIYTTFLNTLNKHNYKYKGFRINLSKCDVPMSRGLGSSATCIVGGIFAANSIMGNVMSFDEIIKEAVSIEGHPDNVVPAIVGGMTVSIMDKDNVIYSNVTVPDRLRAFVMIPNYKLGTEEARGVLPDSYTREECVFNISRAAMLVNVMNNGEIEKLRLCMQDKIHQKYRGALIRNIDDIFKKAYEFGSLAEFISGSGSTLIAFIDKDNNEFYDRMKNFLDTLEDEWTVHLLKPNFTGAEIIKNR</sequence>
<comment type="function">
    <text evidence="1">Catalyzes the ATP-dependent phosphorylation of L-homoserine to L-homoserine phosphate.</text>
</comment>
<comment type="catalytic activity">
    <reaction evidence="1">
        <text>L-homoserine + ATP = O-phospho-L-homoserine + ADP + H(+)</text>
        <dbReference type="Rhea" id="RHEA:13985"/>
        <dbReference type="ChEBI" id="CHEBI:15378"/>
        <dbReference type="ChEBI" id="CHEBI:30616"/>
        <dbReference type="ChEBI" id="CHEBI:57476"/>
        <dbReference type="ChEBI" id="CHEBI:57590"/>
        <dbReference type="ChEBI" id="CHEBI:456216"/>
        <dbReference type="EC" id="2.7.1.39"/>
    </reaction>
</comment>
<comment type="pathway">
    <text evidence="1">Amino-acid biosynthesis; L-threonine biosynthesis; L-threonine from L-aspartate: step 4/5.</text>
</comment>
<comment type="subcellular location">
    <subcellularLocation>
        <location evidence="1">Cytoplasm</location>
    </subcellularLocation>
</comment>
<comment type="similarity">
    <text evidence="1">Belongs to the GHMP kinase family. Homoserine kinase subfamily.</text>
</comment>
<feature type="chain" id="PRO_1000049125" description="Homoserine kinase">
    <location>
        <begin position="1"/>
        <end position="299"/>
    </location>
</feature>
<feature type="binding site" evidence="1">
    <location>
        <begin position="85"/>
        <end position="95"/>
    </location>
    <ligand>
        <name>ATP</name>
        <dbReference type="ChEBI" id="CHEBI:30616"/>
    </ligand>
</feature>
<dbReference type="EC" id="2.7.1.39" evidence="1"/>
<dbReference type="EMBL" id="CP000382">
    <property type="protein sequence ID" value="ABK62607.1"/>
    <property type="molecule type" value="Genomic_DNA"/>
</dbReference>
<dbReference type="RefSeq" id="WP_011723151.1">
    <property type="nucleotide sequence ID" value="NC_008593.1"/>
</dbReference>
<dbReference type="SMR" id="A0Q3H1"/>
<dbReference type="STRING" id="386415.NT01CX_0707"/>
<dbReference type="KEGG" id="cno:NT01CX_0707"/>
<dbReference type="PATRIC" id="fig|386415.7.peg.2211"/>
<dbReference type="eggNOG" id="COG0083">
    <property type="taxonomic scope" value="Bacteria"/>
</dbReference>
<dbReference type="HOGENOM" id="CLU_041243_0_0_9"/>
<dbReference type="UniPathway" id="UPA00050">
    <property type="reaction ID" value="UER00064"/>
</dbReference>
<dbReference type="Proteomes" id="UP000008220">
    <property type="component" value="Chromosome"/>
</dbReference>
<dbReference type="GO" id="GO:0005737">
    <property type="term" value="C:cytoplasm"/>
    <property type="evidence" value="ECO:0007669"/>
    <property type="project" value="UniProtKB-SubCell"/>
</dbReference>
<dbReference type="GO" id="GO:0005524">
    <property type="term" value="F:ATP binding"/>
    <property type="evidence" value="ECO:0007669"/>
    <property type="project" value="UniProtKB-UniRule"/>
</dbReference>
<dbReference type="GO" id="GO:0004413">
    <property type="term" value="F:homoserine kinase activity"/>
    <property type="evidence" value="ECO:0007669"/>
    <property type="project" value="UniProtKB-UniRule"/>
</dbReference>
<dbReference type="GO" id="GO:0009088">
    <property type="term" value="P:threonine biosynthetic process"/>
    <property type="evidence" value="ECO:0007669"/>
    <property type="project" value="UniProtKB-UniRule"/>
</dbReference>
<dbReference type="Gene3D" id="3.30.230.10">
    <property type="match status" value="1"/>
</dbReference>
<dbReference type="Gene3D" id="3.30.70.890">
    <property type="entry name" value="GHMP kinase, C-terminal domain"/>
    <property type="match status" value="1"/>
</dbReference>
<dbReference type="HAMAP" id="MF_00384">
    <property type="entry name" value="Homoser_kinase"/>
    <property type="match status" value="1"/>
</dbReference>
<dbReference type="InterPro" id="IPR013750">
    <property type="entry name" value="GHMP_kinase_C_dom"/>
</dbReference>
<dbReference type="InterPro" id="IPR036554">
    <property type="entry name" value="GHMP_kinase_C_sf"/>
</dbReference>
<dbReference type="InterPro" id="IPR006204">
    <property type="entry name" value="GHMP_kinase_N_dom"/>
</dbReference>
<dbReference type="InterPro" id="IPR006203">
    <property type="entry name" value="GHMP_knse_ATP-bd_CS"/>
</dbReference>
<dbReference type="InterPro" id="IPR000870">
    <property type="entry name" value="Homoserine_kinase"/>
</dbReference>
<dbReference type="InterPro" id="IPR020568">
    <property type="entry name" value="Ribosomal_Su5_D2-typ_SF"/>
</dbReference>
<dbReference type="InterPro" id="IPR014721">
    <property type="entry name" value="Ribsml_uS5_D2-typ_fold_subgr"/>
</dbReference>
<dbReference type="NCBIfam" id="TIGR00191">
    <property type="entry name" value="thrB"/>
    <property type="match status" value="1"/>
</dbReference>
<dbReference type="PANTHER" id="PTHR20861:SF1">
    <property type="entry name" value="HOMOSERINE KINASE"/>
    <property type="match status" value="1"/>
</dbReference>
<dbReference type="PANTHER" id="PTHR20861">
    <property type="entry name" value="HOMOSERINE/4-DIPHOSPHOCYTIDYL-2-C-METHYL-D-ERYTHRITOL KINASE"/>
    <property type="match status" value="1"/>
</dbReference>
<dbReference type="Pfam" id="PF08544">
    <property type="entry name" value="GHMP_kinases_C"/>
    <property type="match status" value="1"/>
</dbReference>
<dbReference type="Pfam" id="PF00288">
    <property type="entry name" value="GHMP_kinases_N"/>
    <property type="match status" value="1"/>
</dbReference>
<dbReference type="PIRSF" id="PIRSF000676">
    <property type="entry name" value="Homoser_kin"/>
    <property type="match status" value="1"/>
</dbReference>
<dbReference type="PRINTS" id="PR00958">
    <property type="entry name" value="HOMSERKINASE"/>
</dbReference>
<dbReference type="SUPFAM" id="SSF55060">
    <property type="entry name" value="GHMP Kinase, C-terminal domain"/>
    <property type="match status" value="1"/>
</dbReference>
<dbReference type="SUPFAM" id="SSF54211">
    <property type="entry name" value="Ribosomal protein S5 domain 2-like"/>
    <property type="match status" value="1"/>
</dbReference>
<dbReference type="PROSITE" id="PS00627">
    <property type="entry name" value="GHMP_KINASES_ATP"/>
    <property type="match status" value="1"/>
</dbReference>
<proteinExistence type="inferred from homology"/>
<gene>
    <name evidence="1" type="primary">thrB</name>
    <name type="ordered locus">NT01CX_0707</name>
</gene>
<evidence type="ECO:0000255" key="1">
    <source>
        <dbReference type="HAMAP-Rule" id="MF_00384"/>
    </source>
</evidence>
<protein>
    <recommendedName>
        <fullName evidence="1">Homoserine kinase</fullName>
        <shortName evidence="1">HK</shortName>
        <shortName evidence="1">HSK</shortName>
        <ecNumber evidence="1">2.7.1.39</ecNumber>
    </recommendedName>
</protein>
<organism>
    <name type="scientific">Clostridium novyi (strain NT)</name>
    <dbReference type="NCBI Taxonomy" id="386415"/>
    <lineage>
        <taxon>Bacteria</taxon>
        <taxon>Bacillati</taxon>
        <taxon>Bacillota</taxon>
        <taxon>Clostridia</taxon>
        <taxon>Eubacteriales</taxon>
        <taxon>Clostridiaceae</taxon>
        <taxon>Clostridium</taxon>
    </lineage>
</organism>
<keyword id="KW-0028">Amino-acid biosynthesis</keyword>
<keyword id="KW-0067">ATP-binding</keyword>
<keyword id="KW-0963">Cytoplasm</keyword>
<keyword id="KW-0418">Kinase</keyword>
<keyword id="KW-0547">Nucleotide-binding</keyword>
<keyword id="KW-1185">Reference proteome</keyword>
<keyword id="KW-0791">Threonine biosynthesis</keyword>
<keyword id="KW-0808">Transferase</keyword>
<reference key="1">
    <citation type="journal article" date="2006" name="Nat. Biotechnol.">
        <title>The genome and transcriptomes of the anti-tumor agent Clostridium novyi-NT.</title>
        <authorList>
            <person name="Bettegowda C."/>
            <person name="Huang X."/>
            <person name="Lin J."/>
            <person name="Cheong I."/>
            <person name="Kohli M."/>
            <person name="Szabo S.A."/>
            <person name="Zhang X."/>
            <person name="Diaz L.A. Jr."/>
            <person name="Velculescu V.E."/>
            <person name="Parmigiani G."/>
            <person name="Kinzler K.W."/>
            <person name="Vogelstein B."/>
            <person name="Zhou S."/>
        </authorList>
    </citation>
    <scope>NUCLEOTIDE SEQUENCE [LARGE SCALE GENOMIC DNA]</scope>
    <source>
        <strain>NT</strain>
    </source>
</reference>
<name>KHSE_CLONN</name>
<accession>A0Q3H1</accession>